<dbReference type="EC" id="2.1.2.9" evidence="1"/>
<dbReference type="EMBL" id="CR954246">
    <property type="protein sequence ID" value="CAI85136.1"/>
    <property type="molecule type" value="Genomic_DNA"/>
</dbReference>
<dbReference type="SMR" id="Q3IDI3"/>
<dbReference type="STRING" id="326442.PSHAa0022"/>
<dbReference type="KEGG" id="pha:PSHAa0022"/>
<dbReference type="PATRIC" id="fig|326442.8.peg.24"/>
<dbReference type="eggNOG" id="COG0223">
    <property type="taxonomic scope" value="Bacteria"/>
</dbReference>
<dbReference type="HOGENOM" id="CLU_033347_1_2_6"/>
<dbReference type="BioCyc" id="PHAL326442:PSHA_RS00110-MONOMER"/>
<dbReference type="Proteomes" id="UP000006843">
    <property type="component" value="Chromosome I"/>
</dbReference>
<dbReference type="GO" id="GO:0005829">
    <property type="term" value="C:cytosol"/>
    <property type="evidence" value="ECO:0007669"/>
    <property type="project" value="TreeGrafter"/>
</dbReference>
<dbReference type="GO" id="GO:0004479">
    <property type="term" value="F:methionyl-tRNA formyltransferase activity"/>
    <property type="evidence" value="ECO:0007669"/>
    <property type="project" value="UniProtKB-UniRule"/>
</dbReference>
<dbReference type="CDD" id="cd08646">
    <property type="entry name" value="FMT_core_Met-tRNA-FMT_N"/>
    <property type="match status" value="1"/>
</dbReference>
<dbReference type="CDD" id="cd08704">
    <property type="entry name" value="Met_tRNA_FMT_C"/>
    <property type="match status" value="1"/>
</dbReference>
<dbReference type="FunFam" id="3.40.50.170:FF:000003">
    <property type="entry name" value="Methionyl-tRNA formyltransferase"/>
    <property type="match status" value="1"/>
</dbReference>
<dbReference type="Gene3D" id="3.10.25.10">
    <property type="entry name" value="Formyl transferase, C-terminal domain"/>
    <property type="match status" value="1"/>
</dbReference>
<dbReference type="Gene3D" id="3.40.50.170">
    <property type="entry name" value="Formyl transferase, N-terminal domain"/>
    <property type="match status" value="1"/>
</dbReference>
<dbReference type="HAMAP" id="MF_00182">
    <property type="entry name" value="Formyl_trans"/>
    <property type="match status" value="1"/>
</dbReference>
<dbReference type="InterPro" id="IPR005794">
    <property type="entry name" value="Fmt"/>
</dbReference>
<dbReference type="InterPro" id="IPR005793">
    <property type="entry name" value="Formyl_trans_C"/>
</dbReference>
<dbReference type="InterPro" id="IPR037022">
    <property type="entry name" value="Formyl_trans_C_sf"/>
</dbReference>
<dbReference type="InterPro" id="IPR002376">
    <property type="entry name" value="Formyl_transf_N"/>
</dbReference>
<dbReference type="InterPro" id="IPR036477">
    <property type="entry name" value="Formyl_transf_N_sf"/>
</dbReference>
<dbReference type="InterPro" id="IPR011034">
    <property type="entry name" value="Formyl_transferase-like_C_sf"/>
</dbReference>
<dbReference type="InterPro" id="IPR001555">
    <property type="entry name" value="GART_AS"/>
</dbReference>
<dbReference type="InterPro" id="IPR044135">
    <property type="entry name" value="Met-tRNA-FMT_C"/>
</dbReference>
<dbReference type="InterPro" id="IPR041711">
    <property type="entry name" value="Met-tRNA-FMT_N"/>
</dbReference>
<dbReference type="NCBIfam" id="TIGR00460">
    <property type="entry name" value="fmt"/>
    <property type="match status" value="1"/>
</dbReference>
<dbReference type="PANTHER" id="PTHR11138">
    <property type="entry name" value="METHIONYL-TRNA FORMYLTRANSFERASE"/>
    <property type="match status" value="1"/>
</dbReference>
<dbReference type="PANTHER" id="PTHR11138:SF5">
    <property type="entry name" value="METHIONYL-TRNA FORMYLTRANSFERASE, MITOCHONDRIAL"/>
    <property type="match status" value="1"/>
</dbReference>
<dbReference type="Pfam" id="PF02911">
    <property type="entry name" value="Formyl_trans_C"/>
    <property type="match status" value="1"/>
</dbReference>
<dbReference type="Pfam" id="PF00551">
    <property type="entry name" value="Formyl_trans_N"/>
    <property type="match status" value="1"/>
</dbReference>
<dbReference type="SUPFAM" id="SSF50486">
    <property type="entry name" value="FMT C-terminal domain-like"/>
    <property type="match status" value="1"/>
</dbReference>
<dbReference type="SUPFAM" id="SSF53328">
    <property type="entry name" value="Formyltransferase"/>
    <property type="match status" value="1"/>
</dbReference>
<dbReference type="PROSITE" id="PS00373">
    <property type="entry name" value="GART"/>
    <property type="match status" value="1"/>
</dbReference>
<keyword id="KW-0648">Protein biosynthesis</keyword>
<keyword id="KW-1185">Reference proteome</keyword>
<keyword id="KW-0808">Transferase</keyword>
<gene>
    <name evidence="1" type="primary">fmt</name>
    <name type="ordered locus">PSHAa0022</name>
</gene>
<evidence type="ECO:0000255" key="1">
    <source>
        <dbReference type="HAMAP-Rule" id="MF_00182"/>
    </source>
</evidence>
<name>FMT_PSET1</name>
<feature type="chain" id="PRO_1000020132" description="Methionyl-tRNA formyltransferase">
    <location>
        <begin position="1"/>
        <end position="321"/>
    </location>
</feature>
<feature type="binding site" evidence="1">
    <location>
        <begin position="113"/>
        <end position="116"/>
    </location>
    <ligand>
        <name>(6S)-5,6,7,8-tetrahydrofolate</name>
        <dbReference type="ChEBI" id="CHEBI:57453"/>
    </ligand>
</feature>
<protein>
    <recommendedName>
        <fullName evidence="1">Methionyl-tRNA formyltransferase</fullName>
        <ecNumber evidence="1">2.1.2.9</ecNumber>
    </recommendedName>
</protein>
<comment type="function">
    <text evidence="1">Attaches a formyl group to the free amino group of methionyl-tRNA(fMet). The formyl group appears to play a dual role in the initiator identity of N-formylmethionyl-tRNA by promoting its recognition by IF2 and preventing the misappropriation of this tRNA by the elongation apparatus.</text>
</comment>
<comment type="catalytic activity">
    <reaction evidence="1">
        <text>L-methionyl-tRNA(fMet) + (6R)-10-formyltetrahydrofolate = N-formyl-L-methionyl-tRNA(fMet) + (6S)-5,6,7,8-tetrahydrofolate + H(+)</text>
        <dbReference type="Rhea" id="RHEA:24380"/>
        <dbReference type="Rhea" id="RHEA-COMP:9952"/>
        <dbReference type="Rhea" id="RHEA-COMP:9953"/>
        <dbReference type="ChEBI" id="CHEBI:15378"/>
        <dbReference type="ChEBI" id="CHEBI:57453"/>
        <dbReference type="ChEBI" id="CHEBI:78530"/>
        <dbReference type="ChEBI" id="CHEBI:78844"/>
        <dbReference type="ChEBI" id="CHEBI:195366"/>
        <dbReference type="EC" id="2.1.2.9"/>
    </reaction>
</comment>
<comment type="similarity">
    <text evidence="1">Belongs to the Fmt family.</text>
</comment>
<organism>
    <name type="scientific">Pseudoalteromonas translucida (strain TAC 125)</name>
    <dbReference type="NCBI Taxonomy" id="326442"/>
    <lineage>
        <taxon>Bacteria</taxon>
        <taxon>Pseudomonadati</taxon>
        <taxon>Pseudomonadota</taxon>
        <taxon>Gammaproteobacteria</taxon>
        <taxon>Alteromonadales</taxon>
        <taxon>Pseudoalteromonadaceae</taxon>
        <taxon>Pseudoalteromonas</taxon>
    </lineage>
</organism>
<sequence length="321" mass="34885">MTQPLRIIFAGTPDFAARHLQALIQSEHQIVGVYSQPDRPAGRGKKLKASEVKELALEHNLPVFQPQSLKTEDALNELTRLNADIMIVVAYGLILPKAILDAPRLGCLNVHGSILPRWRGAAPIQRAIWAGDEQTGVTIMQMNEGLDTGDMLHISRCPISATETSASLYTKLADLGPGALIDTINNLANGKITPEPQNDAAANYAKKLSKDEANIDWSMSAAQIERNIRAFNPWPVCFTQMGGQPVKIYQAHVVEQSSSQPDNNGRVLSSDKNGVIVGCGEHALCITQLQPQGKKPMAINDFLNGRSDWVTPGTILGENNE</sequence>
<proteinExistence type="inferred from homology"/>
<accession>Q3IDI3</accession>
<reference key="1">
    <citation type="journal article" date="2005" name="Genome Res.">
        <title>Coping with cold: the genome of the versatile marine Antarctica bacterium Pseudoalteromonas haloplanktis TAC125.</title>
        <authorList>
            <person name="Medigue C."/>
            <person name="Krin E."/>
            <person name="Pascal G."/>
            <person name="Barbe V."/>
            <person name="Bernsel A."/>
            <person name="Bertin P.N."/>
            <person name="Cheung F."/>
            <person name="Cruveiller S."/>
            <person name="D'Amico S."/>
            <person name="Duilio A."/>
            <person name="Fang G."/>
            <person name="Feller G."/>
            <person name="Ho C."/>
            <person name="Mangenot S."/>
            <person name="Marino G."/>
            <person name="Nilsson J."/>
            <person name="Parrilli E."/>
            <person name="Rocha E.P.C."/>
            <person name="Rouy Z."/>
            <person name="Sekowska A."/>
            <person name="Tutino M.L."/>
            <person name="Vallenet D."/>
            <person name="von Heijne G."/>
            <person name="Danchin A."/>
        </authorList>
    </citation>
    <scope>NUCLEOTIDE SEQUENCE [LARGE SCALE GENOMIC DNA]</scope>
    <source>
        <strain>TAC 125</strain>
    </source>
</reference>